<sequence length="364" mass="38219">MVQSAVTHFRPVMILAGGTGGHIFPGLAVAGVLRARGVPVVWLGAAGKMETHLVPKHGIEIQTIAVSGVRGHGMLALLGAPVRVLPAIFAAMRVLRRYRPRVVVSFGGFAAGPGGIAARLMGLPLIVHEQNRAPGMTNRVLARVARRVLSGFPGSFVAEEVVGNPVRKDIAALPAPGVRFAGRSGPVRLLVLGGSQGARVMNNALPVVLRVLSDSDVAVEVRHQCGEALRAETEGAYAYAGVAARVEPFISDMAAAYSWADLVVCRAGASTLAELCAAGVGSVLIPFPAAVDDHQRRNAEYLVAAGAALLLQQQDRAFYVYLESVLRDLLSNPMRRLAMAEAARGLAKSDAAECIAEIILKESI</sequence>
<organism>
    <name type="scientific">Xylella fastidiosa (strain Temecula1 / ATCC 700964)</name>
    <dbReference type="NCBI Taxonomy" id="183190"/>
    <lineage>
        <taxon>Bacteria</taxon>
        <taxon>Pseudomonadati</taxon>
        <taxon>Pseudomonadota</taxon>
        <taxon>Gammaproteobacteria</taxon>
        <taxon>Lysobacterales</taxon>
        <taxon>Lysobacteraceae</taxon>
        <taxon>Xylella</taxon>
    </lineage>
</organism>
<gene>
    <name evidence="1" type="primary">murG</name>
    <name type="ordered locus">PD_1866</name>
</gene>
<proteinExistence type="inferred from homology"/>
<dbReference type="EC" id="2.4.1.227" evidence="1"/>
<dbReference type="EMBL" id="AE009442">
    <property type="protein sequence ID" value="AAO29698.1"/>
    <property type="molecule type" value="Genomic_DNA"/>
</dbReference>
<dbReference type="SMR" id="Q87AF9"/>
<dbReference type="CAZy" id="GT28">
    <property type="family name" value="Glycosyltransferase Family 28"/>
</dbReference>
<dbReference type="KEGG" id="xft:PD_1866"/>
<dbReference type="HOGENOM" id="CLU_037404_2_0_6"/>
<dbReference type="UniPathway" id="UPA00219"/>
<dbReference type="Proteomes" id="UP000002516">
    <property type="component" value="Chromosome"/>
</dbReference>
<dbReference type="GO" id="GO:0005886">
    <property type="term" value="C:plasma membrane"/>
    <property type="evidence" value="ECO:0007669"/>
    <property type="project" value="UniProtKB-SubCell"/>
</dbReference>
<dbReference type="GO" id="GO:0051991">
    <property type="term" value="F:UDP-N-acetyl-D-glucosamine:N-acetylmuramoyl-L-alanyl-D-glutamyl-meso-2,6-diaminopimelyl-D-alanyl-D-alanine-diphosphoundecaprenol 4-beta-N-acetylglucosaminlytransferase activity"/>
    <property type="evidence" value="ECO:0007669"/>
    <property type="project" value="RHEA"/>
</dbReference>
<dbReference type="GO" id="GO:0050511">
    <property type="term" value="F:undecaprenyldiphospho-muramoylpentapeptide beta-N-acetylglucosaminyltransferase activity"/>
    <property type="evidence" value="ECO:0007669"/>
    <property type="project" value="UniProtKB-UniRule"/>
</dbReference>
<dbReference type="GO" id="GO:0005975">
    <property type="term" value="P:carbohydrate metabolic process"/>
    <property type="evidence" value="ECO:0007669"/>
    <property type="project" value="InterPro"/>
</dbReference>
<dbReference type="GO" id="GO:0051301">
    <property type="term" value="P:cell division"/>
    <property type="evidence" value="ECO:0007669"/>
    <property type="project" value="UniProtKB-KW"/>
</dbReference>
<dbReference type="GO" id="GO:0071555">
    <property type="term" value="P:cell wall organization"/>
    <property type="evidence" value="ECO:0007669"/>
    <property type="project" value="UniProtKB-KW"/>
</dbReference>
<dbReference type="GO" id="GO:0030259">
    <property type="term" value="P:lipid glycosylation"/>
    <property type="evidence" value="ECO:0007669"/>
    <property type="project" value="UniProtKB-UniRule"/>
</dbReference>
<dbReference type="GO" id="GO:0009252">
    <property type="term" value="P:peptidoglycan biosynthetic process"/>
    <property type="evidence" value="ECO:0007669"/>
    <property type="project" value="UniProtKB-UniRule"/>
</dbReference>
<dbReference type="GO" id="GO:0008360">
    <property type="term" value="P:regulation of cell shape"/>
    <property type="evidence" value="ECO:0007669"/>
    <property type="project" value="UniProtKB-KW"/>
</dbReference>
<dbReference type="CDD" id="cd03785">
    <property type="entry name" value="GT28_MurG"/>
    <property type="match status" value="1"/>
</dbReference>
<dbReference type="Gene3D" id="3.40.50.2000">
    <property type="entry name" value="Glycogen Phosphorylase B"/>
    <property type="match status" value="2"/>
</dbReference>
<dbReference type="HAMAP" id="MF_00033">
    <property type="entry name" value="MurG"/>
    <property type="match status" value="1"/>
</dbReference>
<dbReference type="InterPro" id="IPR006009">
    <property type="entry name" value="GlcNAc_MurG"/>
</dbReference>
<dbReference type="InterPro" id="IPR007235">
    <property type="entry name" value="Glyco_trans_28_C"/>
</dbReference>
<dbReference type="InterPro" id="IPR004276">
    <property type="entry name" value="GlycoTrans_28_N"/>
</dbReference>
<dbReference type="NCBIfam" id="TIGR01133">
    <property type="entry name" value="murG"/>
    <property type="match status" value="1"/>
</dbReference>
<dbReference type="PANTHER" id="PTHR21015:SF22">
    <property type="entry name" value="GLYCOSYLTRANSFERASE"/>
    <property type="match status" value="1"/>
</dbReference>
<dbReference type="PANTHER" id="PTHR21015">
    <property type="entry name" value="UDP-N-ACETYLGLUCOSAMINE--N-ACETYLMURAMYL-(PENTAPEPTIDE) PYROPHOSPHORYL-UNDECAPRENOL N-ACETYLGLUCOSAMINE TRANSFERASE 1"/>
    <property type="match status" value="1"/>
</dbReference>
<dbReference type="Pfam" id="PF04101">
    <property type="entry name" value="Glyco_tran_28_C"/>
    <property type="match status" value="1"/>
</dbReference>
<dbReference type="Pfam" id="PF03033">
    <property type="entry name" value="Glyco_transf_28"/>
    <property type="match status" value="1"/>
</dbReference>
<dbReference type="SUPFAM" id="SSF53756">
    <property type="entry name" value="UDP-Glycosyltransferase/glycogen phosphorylase"/>
    <property type="match status" value="1"/>
</dbReference>
<name>MURG_XYLFT</name>
<feature type="chain" id="PRO_0000109243" description="UDP-N-acetylglucosamine--N-acetylmuramyl-(pentapeptide) pyrophosphoryl-undecaprenol N-acetylglucosamine transferase">
    <location>
        <begin position="1"/>
        <end position="364"/>
    </location>
</feature>
<feature type="binding site" evidence="1">
    <location>
        <begin position="19"/>
        <end position="21"/>
    </location>
    <ligand>
        <name>UDP-N-acetyl-alpha-D-glucosamine</name>
        <dbReference type="ChEBI" id="CHEBI:57705"/>
    </ligand>
</feature>
<feature type="binding site" evidence="1">
    <location>
        <position position="131"/>
    </location>
    <ligand>
        <name>UDP-N-acetyl-alpha-D-glucosamine</name>
        <dbReference type="ChEBI" id="CHEBI:57705"/>
    </ligand>
</feature>
<feature type="binding site" evidence="1">
    <location>
        <position position="167"/>
    </location>
    <ligand>
        <name>UDP-N-acetyl-alpha-D-glucosamine</name>
        <dbReference type="ChEBI" id="CHEBI:57705"/>
    </ligand>
</feature>
<feature type="binding site" evidence="1">
    <location>
        <position position="195"/>
    </location>
    <ligand>
        <name>UDP-N-acetyl-alpha-D-glucosamine</name>
        <dbReference type="ChEBI" id="CHEBI:57705"/>
    </ligand>
</feature>
<feature type="binding site" evidence="1">
    <location>
        <position position="250"/>
    </location>
    <ligand>
        <name>UDP-N-acetyl-alpha-D-glucosamine</name>
        <dbReference type="ChEBI" id="CHEBI:57705"/>
    </ligand>
</feature>
<feature type="binding site" evidence="1">
    <location>
        <position position="295"/>
    </location>
    <ligand>
        <name>UDP-N-acetyl-alpha-D-glucosamine</name>
        <dbReference type="ChEBI" id="CHEBI:57705"/>
    </ligand>
</feature>
<comment type="function">
    <text evidence="1">Cell wall formation. Catalyzes the transfer of a GlcNAc subunit on undecaprenyl-pyrophosphoryl-MurNAc-pentapeptide (lipid intermediate I) to form undecaprenyl-pyrophosphoryl-MurNAc-(pentapeptide)GlcNAc (lipid intermediate II).</text>
</comment>
<comment type="catalytic activity">
    <reaction evidence="1">
        <text>di-trans,octa-cis-undecaprenyl diphospho-N-acetyl-alpha-D-muramoyl-L-alanyl-D-glutamyl-meso-2,6-diaminopimeloyl-D-alanyl-D-alanine + UDP-N-acetyl-alpha-D-glucosamine = di-trans,octa-cis-undecaprenyl diphospho-[N-acetyl-alpha-D-glucosaminyl-(1-&gt;4)]-N-acetyl-alpha-D-muramoyl-L-alanyl-D-glutamyl-meso-2,6-diaminopimeloyl-D-alanyl-D-alanine + UDP + H(+)</text>
        <dbReference type="Rhea" id="RHEA:31227"/>
        <dbReference type="ChEBI" id="CHEBI:15378"/>
        <dbReference type="ChEBI" id="CHEBI:57705"/>
        <dbReference type="ChEBI" id="CHEBI:58223"/>
        <dbReference type="ChEBI" id="CHEBI:61387"/>
        <dbReference type="ChEBI" id="CHEBI:61388"/>
        <dbReference type="EC" id="2.4.1.227"/>
    </reaction>
</comment>
<comment type="pathway">
    <text evidence="1">Cell wall biogenesis; peptidoglycan biosynthesis.</text>
</comment>
<comment type="subcellular location">
    <subcellularLocation>
        <location evidence="1">Cell inner membrane</location>
        <topology evidence="1">Peripheral membrane protein</topology>
        <orientation evidence="1">Cytoplasmic side</orientation>
    </subcellularLocation>
</comment>
<comment type="similarity">
    <text evidence="1">Belongs to the glycosyltransferase 28 family. MurG subfamily.</text>
</comment>
<evidence type="ECO:0000255" key="1">
    <source>
        <dbReference type="HAMAP-Rule" id="MF_00033"/>
    </source>
</evidence>
<accession>Q87AF9</accession>
<reference key="1">
    <citation type="journal article" date="2003" name="J. Bacteriol.">
        <title>Comparative analyses of the complete genome sequences of Pierce's disease and citrus variegated chlorosis strains of Xylella fastidiosa.</title>
        <authorList>
            <person name="Van Sluys M.A."/>
            <person name="de Oliveira M.C."/>
            <person name="Monteiro-Vitorello C.B."/>
            <person name="Miyaki C.Y."/>
            <person name="Furlan L.R."/>
            <person name="Camargo L.E.A."/>
            <person name="da Silva A.C.R."/>
            <person name="Moon D.H."/>
            <person name="Takita M.A."/>
            <person name="Lemos E.G.M."/>
            <person name="Machado M.A."/>
            <person name="Ferro M.I.T."/>
            <person name="da Silva F.R."/>
            <person name="Goldman M.H.S."/>
            <person name="Goldman G.H."/>
            <person name="Lemos M.V.F."/>
            <person name="El-Dorry H."/>
            <person name="Tsai S.M."/>
            <person name="Carrer H."/>
            <person name="Carraro D.M."/>
            <person name="de Oliveira R.C."/>
            <person name="Nunes L.R."/>
            <person name="Siqueira W.J."/>
            <person name="Coutinho L.L."/>
            <person name="Kimura E.T."/>
            <person name="Ferro E.S."/>
            <person name="Harakava R."/>
            <person name="Kuramae E.E."/>
            <person name="Marino C.L."/>
            <person name="Giglioti E."/>
            <person name="Abreu I.L."/>
            <person name="Alves L.M.C."/>
            <person name="do Amaral A.M."/>
            <person name="Baia G.S."/>
            <person name="Blanco S.R."/>
            <person name="Brito M.S."/>
            <person name="Cannavan F.S."/>
            <person name="Celestino A.V."/>
            <person name="da Cunha A.F."/>
            <person name="Fenille R.C."/>
            <person name="Ferro J.A."/>
            <person name="Formighieri E.F."/>
            <person name="Kishi L.T."/>
            <person name="Leoni S.G."/>
            <person name="Oliveira A.R."/>
            <person name="Rosa V.E. Jr."/>
            <person name="Sassaki F.T."/>
            <person name="Sena J.A.D."/>
            <person name="de Souza A.A."/>
            <person name="Truffi D."/>
            <person name="Tsukumo F."/>
            <person name="Yanai G.M."/>
            <person name="Zaros L.G."/>
            <person name="Civerolo E.L."/>
            <person name="Simpson A.J.G."/>
            <person name="Almeida N.F. Jr."/>
            <person name="Setubal J.C."/>
            <person name="Kitajima J.P."/>
        </authorList>
    </citation>
    <scope>NUCLEOTIDE SEQUENCE [LARGE SCALE GENOMIC DNA]</scope>
    <source>
        <strain>Temecula1 / ATCC 700964</strain>
    </source>
</reference>
<protein>
    <recommendedName>
        <fullName evidence="1">UDP-N-acetylglucosamine--N-acetylmuramyl-(pentapeptide) pyrophosphoryl-undecaprenol N-acetylglucosamine transferase</fullName>
        <ecNumber evidence="1">2.4.1.227</ecNumber>
    </recommendedName>
    <alternativeName>
        <fullName evidence="1">Undecaprenyl-PP-MurNAc-pentapeptide-UDPGlcNAc GlcNAc transferase</fullName>
    </alternativeName>
</protein>
<keyword id="KW-0131">Cell cycle</keyword>
<keyword id="KW-0132">Cell division</keyword>
<keyword id="KW-0997">Cell inner membrane</keyword>
<keyword id="KW-1003">Cell membrane</keyword>
<keyword id="KW-0133">Cell shape</keyword>
<keyword id="KW-0961">Cell wall biogenesis/degradation</keyword>
<keyword id="KW-0328">Glycosyltransferase</keyword>
<keyword id="KW-0472">Membrane</keyword>
<keyword id="KW-0573">Peptidoglycan synthesis</keyword>
<keyword id="KW-1185">Reference proteome</keyword>
<keyword id="KW-0808">Transferase</keyword>